<name>SP2AA_PAEPO</name>
<evidence type="ECO:0000250" key="1"/>
<evidence type="ECO:0000255" key="2">
    <source>
        <dbReference type="PROSITE-ProRule" id="PRU00198"/>
    </source>
</evidence>
<evidence type="ECO:0000305" key="3"/>
<gene>
    <name type="primary">spoIIAA</name>
</gene>
<sequence>MNLQIEMEHHRGVLIVRLSGELDHHTSDMVRMQMDEAIQRRQCEHIVLSLKNLQFMDSSGLGVILGRYKLINQKGGEMAVCDVNPPVHRLLDMSGLFKIMPIYDNEVNALTELEVVS</sequence>
<feature type="chain" id="PRO_0000194205" description="Anti-sigma F factor antagonist">
    <location>
        <begin position="1"/>
        <end position="117"/>
    </location>
</feature>
<feature type="domain" description="STAS" evidence="2">
    <location>
        <begin position="3"/>
        <end position="113"/>
    </location>
</feature>
<feature type="modified residue" description="Phosphoserine" evidence="1">
    <location>
        <position position="58"/>
    </location>
</feature>
<reference key="1">
    <citation type="journal article" date="1997" name="Gene">
        <title>Sequencing and phylogenetic analysis of the spoIIA operon from diverse Bacillus and Paenibacillus species.</title>
        <authorList>
            <person name="Park S.G."/>
            <person name="Yudkin M.D."/>
        </authorList>
    </citation>
    <scope>NUCLEOTIDE SEQUENCE [GENOMIC DNA]</scope>
    <source>
        <strain>ATCC 842 / DSM 36 / JCM 2507 / NBRC 15309 / NCIMB 8158 / NCTC 10343 / NRRL B-4317 / VKM B-514</strain>
    </source>
</reference>
<accession>O32720</accession>
<comment type="function">
    <text evidence="1">In the phosphorylated form it could act as an anti-anti-sigma factor that counteracts SpoIIAB and thus releases sigma f from inhibition.</text>
</comment>
<comment type="PTM">
    <text evidence="1">Phosphorylated by SpoIIAB on a serine residue.</text>
</comment>
<comment type="similarity">
    <text evidence="3">Belongs to the anti-sigma-factor antagonist family.</text>
</comment>
<organism>
    <name type="scientific">Paenibacillus polymyxa</name>
    <name type="common">Bacillus polymyxa</name>
    <dbReference type="NCBI Taxonomy" id="1406"/>
    <lineage>
        <taxon>Bacteria</taxon>
        <taxon>Bacillati</taxon>
        <taxon>Bacillota</taxon>
        <taxon>Bacilli</taxon>
        <taxon>Bacillales</taxon>
        <taxon>Paenibacillaceae</taxon>
        <taxon>Paenibacillus</taxon>
    </lineage>
</organism>
<dbReference type="EMBL" id="L47358">
    <property type="protein sequence ID" value="AAB81184.1"/>
    <property type="molecule type" value="Genomic_DNA"/>
</dbReference>
<dbReference type="SMR" id="O32720"/>
<dbReference type="eggNOG" id="COG1366">
    <property type="taxonomic scope" value="Bacteria"/>
</dbReference>
<dbReference type="GO" id="GO:0043856">
    <property type="term" value="F:anti-sigma factor antagonist activity"/>
    <property type="evidence" value="ECO:0007669"/>
    <property type="project" value="InterPro"/>
</dbReference>
<dbReference type="GO" id="GO:0045152">
    <property type="term" value="F:antisigma factor binding"/>
    <property type="evidence" value="ECO:0007669"/>
    <property type="project" value="InterPro"/>
</dbReference>
<dbReference type="GO" id="GO:0030435">
    <property type="term" value="P:sporulation resulting in formation of a cellular spore"/>
    <property type="evidence" value="ECO:0007669"/>
    <property type="project" value="UniProtKB-KW"/>
</dbReference>
<dbReference type="CDD" id="cd07043">
    <property type="entry name" value="STAS_anti-anti-sigma_factors"/>
    <property type="match status" value="1"/>
</dbReference>
<dbReference type="Gene3D" id="3.30.750.24">
    <property type="entry name" value="STAS domain"/>
    <property type="match status" value="1"/>
</dbReference>
<dbReference type="InterPro" id="IPR003658">
    <property type="entry name" value="Anti-sigma_ant"/>
</dbReference>
<dbReference type="InterPro" id="IPR014237">
    <property type="entry name" value="Anti-sigma_F_ant"/>
</dbReference>
<dbReference type="InterPro" id="IPR002645">
    <property type="entry name" value="STAS_dom"/>
</dbReference>
<dbReference type="InterPro" id="IPR036513">
    <property type="entry name" value="STAS_dom_sf"/>
</dbReference>
<dbReference type="NCBIfam" id="TIGR00377">
    <property type="entry name" value="ant_ant_sig"/>
    <property type="match status" value="1"/>
</dbReference>
<dbReference type="NCBIfam" id="TIGR02886">
    <property type="entry name" value="spore_II_AA"/>
    <property type="match status" value="1"/>
</dbReference>
<dbReference type="PANTHER" id="PTHR33495:SF2">
    <property type="entry name" value="ANTI-SIGMA FACTOR ANTAGONIST TM_1081-RELATED"/>
    <property type="match status" value="1"/>
</dbReference>
<dbReference type="PANTHER" id="PTHR33495">
    <property type="entry name" value="ANTI-SIGMA FACTOR ANTAGONIST TM_1081-RELATED-RELATED"/>
    <property type="match status" value="1"/>
</dbReference>
<dbReference type="Pfam" id="PF01740">
    <property type="entry name" value="STAS"/>
    <property type="match status" value="1"/>
</dbReference>
<dbReference type="SUPFAM" id="SSF52091">
    <property type="entry name" value="SpoIIaa-like"/>
    <property type="match status" value="1"/>
</dbReference>
<dbReference type="PROSITE" id="PS50801">
    <property type="entry name" value="STAS"/>
    <property type="match status" value="1"/>
</dbReference>
<protein>
    <recommendedName>
        <fullName>Anti-sigma F factor antagonist</fullName>
    </recommendedName>
    <alternativeName>
        <fullName>Stage II sporulation protein AA</fullName>
    </alternativeName>
</protein>
<proteinExistence type="inferred from homology"/>
<keyword id="KW-0597">Phosphoprotein</keyword>
<keyword id="KW-0749">Sporulation</keyword>